<proteinExistence type="evidence at protein level"/>
<name>LIPT_HUMAN</name>
<keyword id="KW-0012">Acyltransferase</keyword>
<keyword id="KW-0225">Disease variant</keyword>
<keyword id="KW-0496">Mitochondrion</keyword>
<keyword id="KW-1267">Proteomics identification</keyword>
<keyword id="KW-1185">Reference proteome</keyword>
<keyword id="KW-0808">Transferase</keyword>
<keyword id="KW-0809">Transit peptide</keyword>
<sequence length="373" mass="42479">MLIPFSMKNCFQLLCNCQVPAAGFKKTVKNGLILQSISNDVYQNLAVEDWIHDHMNLEGKPILFFWQNSPSVVIGRHQNPWQECNLNLMREEGIKLARRRSGGGTVYHDMGNINLTFFTTKKKYDRMENLKLIVRALNAVQPQLDVQATKRFDLLLDGQFKISGTASKIGRTTAYHHCTLLCSTDGTFLSSLLKSPYQGIRSNATASIPSLVKNLLEKDPTLTCEVLMNAVATEYAAYHQIDNHIHLINPTDETLFPGINSKAKELQTWEWIYGKTPKFSINTSFHVLYEQSHLEIKVFIDIKNGRIEICNIEAPDHWLPLEIRDKLNSSLIGSKFCPTETTMLTNILLRTCPQDHKLNSKWNILCEKIKGIM</sequence>
<accession>Q9Y234</accession>
<accession>Q4ZFZ1</accession>
<dbReference type="EC" id="2.3.1.200" evidence="8"/>
<dbReference type="EC" id="2.3.1.-" evidence="2"/>
<dbReference type="EMBL" id="AB017566">
    <property type="protein sequence ID" value="BAA76367.1"/>
    <property type="molecule type" value="mRNA"/>
</dbReference>
<dbReference type="EMBL" id="AB017567">
    <property type="protein sequence ID" value="BAA76368.1"/>
    <property type="molecule type" value="Genomic_DNA"/>
</dbReference>
<dbReference type="EMBL" id="AC092587">
    <property type="protein sequence ID" value="AAX88927.1"/>
    <property type="molecule type" value="Genomic_DNA"/>
</dbReference>
<dbReference type="EMBL" id="CH471127">
    <property type="protein sequence ID" value="EAX01877.1"/>
    <property type="molecule type" value="Genomic_DNA"/>
</dbReference>
<dbReference type="EMBL" id="BC007001">
    <property type="protein sequence ID" value="AAH07001.1"/>
    <property type="molecule type" value="mRNA"/>
</dbReference>
<dbReference type="EMBL" id="BC009772">
    <property type="protein sequence ID" value="AAH09772.1"/>
    <property type="molecule type" value="mRNA"/>
</dbReference>
<dbReference type="EMBL" id="BC070145">
    <property type="protein sequence ID" value="AAH70145.1"/>
    <property type="molecule type" value="mRNA"/>
</dbReference>
<dbReference type="CCDS" id="CCDS2039.1"/>
<dbReference type="RefSeq" id="NP_001191759.1">
    <property type="nucleotide sequence ID" value="NM_001204830.2"/>
</dbReference>
<dbReference type="RefSeq" id="NP_057013.1">
    <property type="nucleotide sequence ID" value="NM_015929.4"/>
</dbReference>
<dbReference type="RefSeq" id="NP_660198.1">
    <property type="nucleotide sequence ID" value="NM_145197.3"/>
</dbReference>
<dbReference type="RefSeq" id="NP_660199.1">
    <property type="nucleotide sequence ID" value="NM_145198.3"/>
</dbReference>
<dbReference type="RefSeq" id="NP_660200.1">
    <property type="nucleotide sequence ID" value="NM_145199.3"/>
</dbReference>
<dbReference type="SMR" id="Q9Y234"/>
<dbReference type="BioGRID" id="119630">
    <property type="interactions" value="16"/>
</dbReference>
<dbReference type="FunCoup" id="Q9Y234">
    <property type="interactions" value="1621"/>
</dbReference>
<dbReference type="IntAct" id="Q9Y234">
    <property type="interactions" value="18"/>
</dbReference>
<dbReference type="STRING" id="9606.ENSP00000377115"/>
<dbReference type="DrugBank" id="DB00166">
    <property type="generic name" value="Lipoic acid"/>
</dbReference>
<dbReference type="iPTMnet" id="Q9Y234"/>
<dbReference type="PhosphoSitePlus" id="Q9Y234"/>
<dbReference type="BioMuta" id="LIPT1"/>
<dbReference type="DMDM" id="25167326"/>
<dbReference type="jPOST" id="Q9Y234"/>
<dbReference type="MassIVE" id="Q9Y234"/>
<dbReference type="PaxDb" id="9606-ENSP00000377115"/>
<dbReference type="PeptideAtlas" id="Q9Y234"/>
<dbReference type="ProteomicsDB" id="85627"/>
<dbReference type="Pumba" id="Q9Y234"/>
<dbReference type="Antibodypedia" id="32790">
    <property type="antibodies" value="40 antibodies from 17 providers"/>
</dbReference>
<dbReference type="DNASU" id="51601"/>
<dbReference type="Ensembl" id="ENST00000393471.2">
    <property type="protein sequence ID" value="ENSP00000377114.2"/>
    <property type="gene ID" value="ENSG00000144182.17"/>
</dbReference>
<dbReference type="Ensembl" id="ENST00000393473.6">
    <property type="protein sequence ID" value="ENSP00000377115.2"/>
    <property type="gene ID" value="ENSG00000144182.17"/>
</dbReference>
<dbReference type="Ensembl" id="ENST00000651691.1">
    <property type="protein sequence ID" value="ENSP00000498546.1"/>
    <property type="gene ID" value="ENSG00000144182.17"/>
</dbReference>
<dbReference type="GeneID" id="51601"/>
<dbReference type="KEGG" id="hsa:51601"/>
<dbReference type="MANE-Select" id="ENST00000651691.1">
    <property type="protein sequence ID" value="ENSP00000498546.1"/>
    <property type="RefSeq nucleotide sequence ID" value="NM_145199.3"/>
    <property type="RefSeq protein sequence ID" value="NP_660200.1"/>
</dbReference>
<dbReference type="UCSC" id="uc002szo.5">
    <property type="organism name" value="human"/>
</dbReference>
<dbReference type="AGR" id="HGNC:29569"/>
<dbReference type="CTD" id="51601"/>
<dbReference type="DisGeNET" id="51601"/>
<dbReference type="GeneCards" id="LIPT1"/>
<dbReference type="HGNC" id="HGNC:29569">
    <property type="gene designation" value="LIPT1"/>
</dbReference>
<dbReference type="HPA" id="ENSG00000144182">
    <property type="expression patterns" value="Low tissue specificity"/>
</dbReference>
<dbReference type="MalaCards" id="LIPT1"/>
<dbReference type="MIM" id="610284">
    <property type="type" value="gene"/>
</dbReference>
<dbReference type="MIM" id="616299">
    <property type="type" value="phenotype"/>
</dbReference>
<dbReference type="neXtProt" id="NX_Q9Y234"/>
<dbReference type="OpenTargets" id="ENSG00000144182"/>
<dbReference type="Orphanet" id="401862">
    <property type="disease" value="Lipoyl transferase 1 deficiency"/>
</dbReference>
<dbReference type="PharmGKB" id="PA134940073"/>
<dbReference type="VEuPathDB" id="HostDB:ENSG00000144182"/>
<dbReference type="eggNOG" id="KOG3159">
    <property type="taxonomic scope" value="Eukaryota"/>
</dbReference>
<dbReference type="GeneTree" id="ENSGT00390000008846"/>
<dbReference type="HOGENOM" id="CLU_022986_4_1_1"/>
<dbReference type="InParanoid" id="Q9Y234"/>
<dbReference type="OMA" id="RYQNWDW"/>
<dbReference type="OrthoDB" id="201621at2759"/>
<dbReference type="PAN-GO" id="Q9Y234">
    <property type="GO annotations" value="4 GO annotations based on evolutionary models"/>
</dbReference>
<dbReference type="PhylomeDB" id="Q9Y234"/>
<dbReference type="TreeFam" id="TF314085"/>
<dbReference type="BioCyc" id="MetaCyc:HS07153-MONOMER"/>
<dbReference type="PathwayCommons" id="Q9Y234"/>
<dbReference type="Reactome" id="R-HSA-9857492">
    <property type="pathway name" value="Protein lipoylation"/>
</dbReference>
<dbReference type="SignaLink" id="Q9Y234"/>
<dbReference type="UniPathway" id="UPA00537">
    <property type="reaction ID" value="UER00595"/>
</dbReference>
<dbReference type="BioGRID-ORCS" id="51601">
    <property type="hits" value="163 hits in 1162 CRISPR screens"/>
</dbReference>
<dbReference type="GenomeRNAi" id="51601"/>
<dbReference type="Pharos" id="Q9Y234">
    <property type="development level" value="Tdark"/>
</dbReference>
<dbReference type="PRO" id="PR:Q9Y234"/>
<dbReference type="Proteomes" id="UP000005640">
    <property type="component" value="Chromosome 2"/>
</dbReference>
<dbReference type="RNAct" id="Q9Y234">
    <property type="molecule type" value="protein"/>
</dbReference>
<dbReference type="Bgee" id="ENSG00000144182">
    <property type="expression patterns" value="Expressed in primordial germ cell in gonad and 203 other cell types or tissues"/>
</dbReference>
<dbReference type="ExpressionAtlas" id="Q9Y234">
    <property type="expression patterns" value="baseline and differential"/>
</dbReference>
<dbReference type="GO" id="GO:0005737">
    <property type="term" value="C:cytoplasm"/>
    <property type="evidence" value="ECO:0000318"/>
    <property type="project" value="GO_Central"/>
</dbReference>
<dbReference type="GO" id="GO:0005759">
    <property type="term" value="C:mitochondrial matrix"/>
    <property type="evidence" value="ECO:0000304"/>
    <property type="project" value="Reactome"/>
</dbReference>
<dbReference type="GO" id="GO:0005739">
    <property type="term" value="C:mitochondrion"/>
    <property type="evidence" value="ECO:0006056"/>
    <property type="project" value="FlyBase"/>
</dbReference>
<dbReference type="GO" id="GO:0017118">
    <property type="term" value="F:lipoyltransferase activity"/>
    <property type="evidence" value="ECO:0000250"/>
    <property type="project" value="UniProtKB"/>
</dbReference>
<dbReference type="GO" id="GO:0016410">
    <property type="term" value="F:N-acyltransferase activity"/>
    <property type="evidence" value="ECO:0000304"/>
    <property type="project" value="Reactome"/>
</dbReference>
<dbReference type="GO" id="GO:0006629">
    <property type="term" value="P:lipid metabolic process"/>
    <property type="evidence" value="ECO:0000304"/>
    <property type="project" value="ProtInc"/>
</dbReference>
<dbReference type="GO" id="GO:0036211">
    <property type="term" value="P:protein modification process"/>
    <property type="evidence" value="ECO:0000304"/>
    <property type="project" value="ProtInc"/>
</dbReference>
<dbReference type="CDD" id="cd16443">
    <property type="entry name" value="LplA"/>
    <property type="match status" value="1"/>
</dbReference>
<dbReference type="FunFam" id="3.30.390.50:FF:000005">
    <property type="entry name" value="Lipoyltransferase 1, mitochondrial"/>
    <property type="match status" value="1"/>
</dbReference>
<dbReference type="FunFam" id="3.30.930.10:FF:000045">
    <property type="entry name" value="lipoyltransferase 1, mitochondrial"/>
    <property type="match status" value="1"/>
</dbReference>
<dbReference type="Gene3D" id="3.30.930.10">
    <property type="entry name" value="Bira Bifunctional Protein, Domain 2"/>
    <property type="match status" value="1"/>
</dbReference>
<dbReference type="Gene3D" id="3.30.390.50">
    <property type="entry name" value="CO dehydrogenase flavoprotein, C-terminal domain"/>
    <property type="match status" value="1"/>
</dbReference>
<dbReference type="InterPro" id="IPR045864">
    <property type="entry name" value="aa-tRNA-synth_II/BPL/LPL"/>
</dbReference>
<dbReference type="InterPro" id="IPR004143">
    <property type="entry name" value="BPL_LPL_catalytic"/>
</dbReference>
<dbReference type="InterPro" id="IPR004562">
    <property type="entry name" value="LipoylTrfase_LipoateP_Ligase"/>
</dbReference>
<dbReference type="NCBIfam" id="TIGR00545">
    <property type="entry name" value="lipoyltrans"/>
    <property type="match status" value="1"/>
</dbReference>
<dbReference type="PANTHER" id="PTHR12561">
    <property type="entry name" value="LIPOATE-PROTEIN LIGASE"/>
    <property type="match status" value="1"/>
</dbReference>
<dbReference type="PANTHER" id="PTHR12561:SF3">
    <property type="entry name" value="LIPOYLTRANSFERASE 1, MITOCHONDRIAL"/>
    <property type="match status" value="1"/>
</dbReference>
<dbReference type="Pfam" id="PF21948">
    <property type="entry name" value="LplA-B_cat"/>
    <property type="match status" value="1"/>
</dbReference>
<dbReference type="SUPFAM" id="SSF55681">
    <property type="entry name" value="Class II aaRS and biotin synthetases"/>
    <property type="match status" value="1"/>
</dbReference>
<dbReference type="PROSITE" id="PS51733">
    <property type="entry name" value="BPL_LPL_CATALYTIC"/>
    <property type="match status" value="1"/>
</dbReference>
<gene>
    <name evidence="11" type="primary">LIPT1</name>
</gene>
<feature type="transit peptide" description="Mitochondrion" evidence="1">
    <location>
        <begin position="1"/>
        <end position="25"/>
    </location>
</feature>
<feature type="chain" id="PRO_0000017856" description="Lipoyl amidotransferase LIPT1, mitochondrial">
    <location>
        <begin position="26"/>
        <end position="373"/>
    </location>
</feature>
<feature type="domain" description="BPL/LPL catalytic" evidence="3">
    <location>
        <begin position="57"/>
        <end position="243"/>
    </location>
</feature>
<feature type="binding site" evidence="2">
    <location>
        <position position="107"/>
    </location>
    <ligand>
        <name>(R)-lipoyl-5'-AMP</name>
        <dbReference type="ChEBI" id="CHEBI:83091"/>
    </ligand>
</feature>
<feature type="binding site" evidence="2">
    <location>
        <position position="151"/>
    </location>
    <ligand>
        <name>(R)-lipoyl-5'-AMP</name>
        <dbReference type="ChEBI" id="CHEBI:83091"/>
    </ligand>
</feature>
<feature type="binding site" evidence="2">
    <location>
        <position position="161"/>
    </location>
    <ligand>
        <name>(R)-lipoyl-5'-AMP</name>
        <dbReference type="ChEBI" id="CHEBI:83091"/>
    </ligand>
</feature>
<feature type="binding site" evidence="2">
    <location>
        <position position="179"/>
    </location>
    <ligand>
        <name>(R)-lipoyl-5'-AMP</name>
        <dbReference type="ChEBI" id="CHEBI:83091"/>
    </ligand>
</feature>
<feature type="sequence variant" id="VAR_073669" description="In LIPT1D; dbSNP:rs767568897." evidence="5 7">
    <original>S</original>
    <variation>F</variation>
    <location>
        <position position="71"/>
    </location>
</feature>
<feature type="sequence variant" id="VAR_073670" description="In LIPT1D; dbSNP:rs137973334." evidence="5">
    <original>R</original>
    <variation>G</variation>
    <location>
        <position position="98"/>
    </location>
</feature>
<feature type="sequence variant" id="VAR_073671" description="In LIPT1D; dbSNP:rs786205156." evidence="6">
    <original>T</original>
    <variation>A</variation>
    <location>
        <position position="179"/>
    </location>
</feature>
<feature type="sequence variant" id="VAR_088500" description="In LIPT1D." evidence="7">
    <original>L</original>
    <variation>S</variation>
    <location>
        <position position="180"/>
    </location>
</feature>
<feature type="sequence variant" id="VAR_088501" description="In LIPT1D." evidence="6">
    <location>
        <begin position="292"/>
        <end position="373"/>
    </location>
</feature>
<protein>
    <recommendedName>
        <fullName evidence="10">Lipoyl amidotransferase LIPT1, mitochondrial</fullName>
        <ecNumber evidence="8">2.3.1.200</ecNumber>
    </recommendedName>
    <alternativeName>
        <fullName>Lipoate biosynthesis protein</fullName>
    </alternativeName>
    <alternativeName>
        <fullName>Lipoate-protein ligase</fullName>
    </alternativeName>
    <alternativeName>
        <fullName>Lipoyl ligase</fullName>
    </alternativeName>
    <alternativeName>
        <fullName>Lipoyltransferase 1</fullName>
        <ecNumber evidence="2">2.3.1.-</ecNumber>
    </alternativeName>
</protein>
<evidence type="ECO:0000250" key="1"/>
<evidence type="ECO:0000250" key="2">
    <source>
        <dbReference type="UniProtKB" id="O46419"/>
    </source>
</evidence>
<evidence type="ECO:0000255" key="3">
    <source>
        <dbReference type="PROSITE-ProRule" id="PRU01067"/>
    </source>
</evidence>
<evidence type="ECO:0000269" key="4">
    <source>
    </source>
</evidence>
<evidence type="ECO:0000269" key="5">
    <source>
    </source>
</evidence>
<evidence type="ECO:0000269" key="6">
    <source>
    </source>
</evidence>
<evidence type="ECO:0000269" key="7">
    <source>
    </source>
</evidence>
<evidence type="ECO:0000269" key="8">
    <source>
    </source>
</evidence>
<evidence type="ECO:0000305" key="9"/>
<evidence type="ECO:0000305" key="10">
    <source>
    </source>
</evidence>
<evidence type="ECO:0000312" key="11">
    <source>
        <dbReference type="HGNC" id="HGNC:29569"/>
    </source>
</evidence>
<comment type="function">
    <text evidence="8 10">Lipoyl amidotransferase that catalyzes the transfer of lipoyl moieties from lipoyl-protein H of the glycine cleavage system (lipoyl-GCSH) to E2 subunits of the pyruvate dehydrogenase complex (PDCE2) (PubMed:29987032). Unable to catalyze the transfer of octanoyl from octanoyl-GCSH to PDCE2 (PubMed:29987032). In vitro, it is also able to catalyze the transfer of the lipoyl group from lipoyl-AMP to the specific lysine residue of lipoyl domains of lipoate-dependent enzymes but this reaction may not be physiologically relevant (Probable).</text>
</comment>
<comment type="catalytic activity">
    <reaction evidence="8">
        <text>N(6)-[(R)-lipoyl]-L-lysyl-[glycine-cleavage complex H protein] + L-lysyl-[lipoyl-carrier protein] = L-lysyl-[glycine-cleavage complex H protein] + N(6)-[(R)-lipoyl]-L-lysyl-[lipoyl-carrier protein]</text>
        <dbReference type="Rhea" id="RHEA:16413"/>
        <dbReference type="Rhea" id="RHEA-COMP:10494"/>
        <dbReference type="Rhea" id="RHEA-COMP:10500"/>
        <dbReference type="Rhea" id="RHEA-COMP:10501"/>
        <dbReference type="Rhea" id="RHEA-COMP:10502"/>
        <dbReference type="ChEBI" id="CHEBI:29969"/>
        <dbReference type="ChEBI" id="CHEBI:83099"/>
        <dbReference type="EC" id="2.3.1.200"/>
    </reaction>
    <physiologicalReaction direction="left-to-right" evidence="8">
        <dbReference type="Rhea" id="RHEA:16414"/>
    </physiologicalReaction>
</comment>
<comment type="catalytic activity">
    <reaction evidence="2">
        <text>(R)-lipoyl-5'-AMP + L-lysyl-[lipoyl-carrier protein] = N(6)-[(R)-lipoyl]-L-lysyl-[lipoyl-carrier protein] + AMP + 2 H(+)</text>
        <dbReference type="Rhea" id="RHEA:20473"/>
        <dbReference type="Rhea" id="RHEA-COMP:10500"/>
        <dbReference type="Rhea" id="RHEA-COMP:10502"/>
        <dbReference type="ChEBI" id="CHEBI:15378"/>
        <dbReference type="ChEBI" id="CHEBI:29969"/>
        <dbReference type="ChEBI" id="CHEBI:83091"/>
        <dbReference type="ChEBI" id="CHEBI:83099"/>
        <dbReference type="ChEBI" id="CHEBI:456215"/>
    </reaction>
</comment>
<comment type="pathway">
    <text>Protein modification; protein lipoylation via exogenous pathway; protein N(6)-(lipoyl)lysine from lipoate: step 2/2.</text>
</comment>
<comment type="interaction">
    <interactant intactId="EBI-727376">
        <id>Q9Y234</id>
    </interactant>
    <interactant intactId="EBI-718729">
        <id>P55212</id>
        <label>CASP6</label>
    </interactant>
    <organismsDiffer>false</organismsDiffer>
    <experiments>3</experiments>
</comment>
<comment type="interaction">
    <interactant intactId="EBI-727376">
        <id>Q9Y234</id>
    </interactant>
    <interactant intactId="EBI-399080">
        <id>Q92993</id>
        <label>KAT5</label>
    </interactant>
    <organismsDiffer>false</organismsDiffer>
    <experiments>3</experiments>
</comment>
<comment type="interaction">
    <interactant intactId="EBI-727376">
        <id>Q9Y234</id>
    </interactant>
    <interactant intactId="EBI-21591415">
        <id>P13473-2</id>
        <label>LAMP2</label>
    </interactant>
    <organismsDiffer>false</organismsDiffer>
    <experiments>3</experiments>
</comment>
<comment type="interaction">
    <interactant intactId="EBI-727376">
        <id>Q9Y234</id>
    </interactant>
    <interactant intactId="EBI-11742507">
        <id>Q8TAP4-4</id>
        <label>LMO3</label>
    </interactant>
    <organismsDiffer>false</organismsDiffer>
    <experiments>3</experiments>
</comment>
<comment type="interaction">
    <interactant intactId="EBI-727376">
        <id>Q9Y234</id>
    </interactant>
    <interactant intactId="EBI-1383528">
        <id>P17252</id>
        <label>PRKCA</label>
    </interactant>
    <organismsDiffer>false</organismsDiffer>
    <experiments>4</experiments>
</comment>
<comment type="interaction">
    <interactant intactId="EBI-727376">
        <id>Q9Y234</id>
    </interactant>
    <interactant intactId="EBI-9090795">
        <id>Q15047-2</id>
        <label>SETDB1</label>
    </interactant>
    <organismsDiffer>false</organismsDiffer>
    <experiments>3</experiments>
</comment>
<comment type="interaction">
    <interactant intactId="EBI-727376">
        <id>Q9Y234</id>
    </interactant>
    <interactant intactId="EBI-359832">
        <id>P61981</id>
        <label>YWHAG</label>
    </interactant>
    <organismsDiffer>false</organismsDiffer>
    <experiments>3</experiments>
</comment>
<comment type="subcellular location">
    <subcellularLocation>
        <location evidence="2">Mitochondrion</location>
    </subcellularLocation>
</comment>
<comment type="tissue specificity">
    <text evidence="4">Highly expressed in skeletal muscle and heart, moderately in kidney and pancreas, and detected at lower levels in liver, brain, placenta and lung.</text>
</comment>
<comment type="disease" evidence="5 6 7">
    <disease id="DI-04388">
        <name>Lipoyltransferase 1 deficiency</name>
        <acronym>LIPT1D</acronym>
        <description>An autosomal recessive disorder due to a defect in lipoic acid metabolism, resulting in severe lactic acidosis and metabolic decompensation. Variable clinical manifestations include delayed psychomotor development, severe hypotonia, dystonia, loss of head control, coma, bradycardia, and pulmonary hypertension.</description>
        <dbReference type="MIM" id="616299"/>
    </disease>
    <text>The disease is caused by variants affecting the gene represented in this entry.</text>
</comment>
<comment type="similarity">
    <text evidence="9">Belongs to the LplA family.</text>
</comment>
<organism>
    <name type="scientific">Homo sapiens</name>
    <name type="common">Human</name>
    <dbReference type="NCBI Taxonomy" id="9606"/>
    <lineage>
        <taxon>Eukaryota</taxon>
        <taxon>Metazoa</taxon>
        <taxon>Chordata</taxon>
        <taxon>Craniata</taxon>
        <taxon>Vertebrata</taxon>
        <taxon>Euteleostomi</taxon>
        <taxon>Mammalia</taxon>
        <taxon>Eutheria</taxon>
        <taxon>Euarchontoglires</taxon>
        <taxon>Primates</taxon>
        <taxon>Haplorrhini</taxon>
        <taxon>Catarrhini</taxon>
        <taxon>Hominidae</taxon>
        <taxon>Homo</taxon>
    </lineage>
</organism>
<reference key="1">
    <citation type="journal article" date="1999" name="Eur. J. Biochem.">
        <title>Molecular cloning, structural characterization and chromosomal localization of human lipoyltransferase gene.</title>
        <authorList>
            <person name="Fujiwara K."/>
            <person name="Suzuki M."/>
            <person name="Okumachi Y."/>
            <person name="Okamura-Ikeda K."/>
            <person name="Fujiwara T."/>
            <person name="Takahashi E."/>
            <person name="Motokawa Y."/>
        </authorList>
    </citation>
    <scope>NUCLEOTIDE SEQUENCE [GENOMIC DNA / MRNA]</scope>
    <scope>TISSUE SPECIFICITY</scope>
    <source>
        <tissue>Liver</tissue>
    </source>
</reference>
<reference key="2">
    <citation type="journal article" date="2005" name="Nature">
        <title>Generation and annotation of the DNA sequences of human chromosomes 2 and 4.</title>
        <authorList>
            <person name="Hillier L.W."/>
            <person name="Graves T.A."/>
            <person name="Fulton R.S."/>
            <person name="Fulton L.A."/>
            <person name="Pepin K.H."/>
            <person name="Minx P."/>
            <person name="Wagner-McPherson C."/>
            <person name="Layman D."/>
            <person name="Wylie K."/>
            <person name="Sekhon M."/>
            <person name="Becker M.C."/>
            <person name="Fewell G.A."/>
            <person name="Delehaunty K.D."/>
            <person name="Miner T.L."/>
            <person name="Nash W.E."/>
            <person name="Kremitzki C."/>
            <person name="Oddy L."/>
            <person name="Du H."/>
            <person name="Sun H."/>
            <person name="Bradshaw-Cordum H."/>
            <person name="Ali J."/>
            <person name="Carter J."/>
            <person name="Cordes M."/>
            <person name="Harris A."/>
            <person name="Isak A."/>
            <person name="van Brunt A."/>
            <person name="Nguyen C."/>
            <person name="Du F."/>
            <person name="Courtney L."/>
            <person name="Kalicki J."/>
            <person name="Ozersky P."/>
            <person name="Abbott S."/>
            <person name="Armstrong J."/>
            <person name="Belter E.A."/>
            <person name="Caruso L."/>
            <person name="Cedroni M."/>
            <person name="Cotton M."/>
            <person name="Davidson T."/>
            <person name="Desai A."/>
            <person name="Elliott G."/>
            <person name="Erb T."/>
            <person name="Fronick C."/>
            <person name="Gaige T."/>
            <person name="Haakenson W."/>
            <person name="Haglund K."/>
            <person name="Holmes A."/>
            <person name="Harkins R."/>
            <person name="Kim K."/>
            <person name="Kruchowski S.S."/>
            <person name="Strong C.M."/>
            <person name="Grewal N."/>
            <person name="Goyea E."/>
            <person name="Hou S."/>
            <person name="Levy A."/>
            <person name="Martinka S."/>
            <person name="Mead K."/>
            <person name="McLellan M.D."/>
            <person name="Meyer R."/>
            <person name="Randall-Maher J."/>
            <person name="Tomlinson C."/>
            <person name="Dauphin-Kohlberg S."/>
            <person name="Kozlowicz-Reilly A."/>
            <person name="Shah N."/>
            <person name="Swearengen-Shahid S."/>
            <person name="Snider J."/>
            <person name="Strong J.T."/>
            <person name="Thompson J."/>
            <person name="Yoakum M."/>
            <person name="Leonard S."/>
            <person name="Pearman C."/>
            <person name="Trani L."/>
            <person name="Radionenko M."/>
            <person name="Waligorski J.E."/>
            <person name="Wang C."/>
            <person name="Rock S.M."/>
            <person name="Tin-Wollam A.-M."/>
            <person name="Maupin R."/>
            <person name="Latreille P."/>
            <person name="Wendl M.C."/>
            <person name="Yang S.-P."/>
            <person name="Pohl C."/>
            <person name="Wallis J.W."/>
            <person name="Spieth J."/>
            <person name="Bieri T.A."/>
            <person name="Berkowicz N."/>
            <person name="Nelson J.O."/>
            <person name="Osborne J."/>
            <person name="Ding L."/>
            <person name="Meyer R."/>
            <person name="Sabo A."/>
            <person name="Shotland Y."/>
            <person name="Sinha P."/>
            <person name="Wohldmann P.E."/>
            <person name="Cook L.L."/>
            <person name="Hickenbotham M.T."/>
            <person name="Eldred J."/>
            <person name="Williams D."/>
            <person name="Jones T.A."/>
            <person name="She X."/>
            <person name="Ciccarelli F.D."/>
            <person name="Izaurralde E."/>
            <person name="Taylor J."/>
            <person name="Schmutz J."/>
            <person name="Myers R.M."/>
            <person name="Cox D.R."/>
            <person name="Huang X."/>
            <person name="McPherson J.D."/>
            <person name="Mardis E.R."/>
            <person name="Clifton S.W."/>
            <person name="Warren W.C."/>
            <person name="Chinwalla A.T."/>
            <person name="Eddy S.R."/>
            <person name="Marra M.A."/>
            <person name="Ovcharenko I."/>
            <person name="Furey T.S."/>
            <person name="Miller W."/>
            <person name="Eichler E.E."/>
            <person name="Bork P."/>
            <person name="Suyama M."/>
            <person name="Torrents D."/>
            <person name="Waterston R.H."/>
            <person name="Wilson R.K."/>
        </authorList>
    </citation>
    <scope>NUCLEOTIDE SEQUENCE [LARGE SCALE GENOMIC DNA]</scope>
</reference>
<reference key="3">
    <citation type="submission" date="2005-09" db="EMBL/GenBank/DDBJ databases">
        <authorList>
            <person name="Mural R.J."/>
            <person name="Istrail S."/>
            <person name="Sutton G.G."/>
            <person name="Florea L."/>
            <person name="Halpern A.L."/>
            <person name="Mobarry C.M."/>
            <person name="Lippert R."/>
            <person name="Walenz B."/>
            <person name="Shatkay H."/>
            <person name="Dew I."/>
            <person name="Miller J.R."/>
            <person name="Flanigan M.J."/>
            <person name="Edwards N.J."/>
            <person name="Bolanos R."/>
            <person name="Fasulo D."/>
            <person name="Halldorsson B.V."/>
            <person name="Hannenhalli S."/>
            <person name="Turner R."/>
            <person name="Yooseph S."/>
            <person name="Lu F."/>
            <person name="Nusskern D.R."/>
            <person name="Shue B.C."/>
            <person name="Zheng X.H."/>
            <person name="Zhong F."/>
            <person name="Delcher A.L."/>
            <person name="Huson D.H."/>
            <person name="Kravitz S.A."/>
            <person name="Mouchard L."/>
            <person name="Reinert K."/>
            <person name="Remington K.A."/>
            <person name="Clark A.G."/>
            <person name="Waterman M.S."/>
            <person name="Eichler E.E."/>
            <person name="Adams M.D."/>
            <person name="Hunkapiller M.W."/>
            <person name="Myers E.W."/>
            <person name="Venter J.C."/>
        </authorList>
    </citation>
    <scope>NUCLEOTIDE SEQUENCE [LARGE SCALE GENOMIC DNA]</scope>
</reference>
<reference key="4">
    <citation type="journal article" date="2004" name="Genome Res.">
        <title>The status, quality, and expansion of the NIH full-length cDNA project: the Mammalian Gene Collection (MGC).</title>
        <authorList>
            <consortium name="The MGC Project Team"/>
        </authorList>
    </citation>
    <scope>NUCLEOTIDE SEQUENCE [LARGE SCALE MRNA]</scope>
    <source>
        <tissue>Bone marrow</tissue>
        <tissue>Lung</tissue>
        <tissue>Urinary bladder</tissue>
    </source>
</reference>
<reference key="5">
    <citation type="journal article" date="2018" name="Proc. Natl. Acad. Sci. U.S.A.">
        <title>Protein moonlighting elucidates the essential human pathway catalyzing lipoic acid assembly on its cognate enzymes.</title>
        <authorList>
            <person name="Cao X."/>
            <person name="Zhu L."/>
            <person name="Song X."/>
            <person name="Hu Z."/>
            <person name="Cronan J.E."/>
        </authorList>
    </citation>
    <scope>FUNCTION</scope>
    <scope>CATALYTIC ACTIVITY</scope>
</reference>
<reference key="6">
    <citation type="journal article" date="2013" name="Orphanet J. Rare Dis.">
        <title>Mutations in human lipoyltransferase gene LIPT1 cause a Leigh disease with secondary deficiency for pyruvate and alpha-ketoglutarate dehydrogenase.</title>
        <authorList>
            <person name="Soreze Y."/>
            <person name="Boutron A."/>
            <person name="Habarou F."/>
            <person name="Barnerias C."/>
            <person name="Nonnenmacher L."/>
            <person name="Delpech H."/>
            <person name="Mamoune A."/>
            <person name="Chretien D."/>
            <person name="Hubert L."/>
            <person name="Bole-Feysot C."/>
            <person name="Nitschke P."/>
            <person name="Correia I."/>
            <person name="Sardet C."/>
            <person name="Boddaert N."/>
            <person name="Hamel Y."/>
            <person name="Delahodde A."/>
            <person name="Ottolenghi C."/>
            <person name="de Lonlay P."/>
        </authorList>
    </citation>
    <scope>VARIANTS LIPT1D ALA-179 AND 292-SER--MET-373 DEL</scope>
    <scope>INVOLVEMENT IN LIPT1D</scope>
</reference>
<reference key="7">
    <citation type="journal article" date="2014" name="Hum. Mol. Genet.">
        <title>Mutations in the lipoyltransferase LIPT1 gene cause a fatal disease associated with a specific lipoylation defect of the 2-ketoacid dehydrogenase complexes.</title>
        <authorList>
            <person name="Tort F."/>
            <person name="Ferrer-Cortes X."/>
            <person name="Thio M."/>
            <person name="Navarro-Sastre A."/>
            <person name="Matalonga L."/>
            <person name="Quintana E."/>
            <person name="Bujan N."/>
            <person name="Arias A."/>
            <person name="Garcia-Villoria J."/>
            <person name="Acquaviva C."/>
            <person name="Vianey-Saban C."/>
            <person name="Artuch R."/>
            <person name="Garcia-Cazorla A."/>
            <person name="Briones P."/>
            <person name="Ribes A."/>
        </authorList>
    </citation>
    <scope>VARIANTS LIPT1D PHE-71 AND GLY-98</scope>
</reference>
<reference key="8">
    <citation type="journal article" date="2018" name="Am. J. Med. Genet. A">
        <title>LIPT1 deficiency presenting as early infantile epileptic encephalopathy, Leigh disease, and secondary pyruvate dehydrogenase complex deficiency.</title>
        <authorList>
            <person name="Stowe R.C."/>
            <person name="Sun Q."/>
            <person name="Elsea S.H."/>
            <person name="Scaglia F."/>
        </authorList>
    </citation>
    <scope>VARIANTS LIPT1D PHE-71 AND SER-180</scope>
</reference>